<name>FETUA_RABIT</name>
<protein>
    <recommendedName>
        <fullName>Alpha-2-HS-glycoprotein</fullName>
    </recommendedName>
    <alternativeName>
        <fullName>Fetuin-A</fullName>
    </alternativeName>
    <alternativeName>
        <fullName>Haemonectin</fullName>
    </alternativeName>
</protein>
<keyword id="KW-0130">Cell adhesion</keyword>
<keyword id="KW-0903">Direct protein sequencing</keyword>
<keyword id="KW-1015">Disulfide bond</keyword>
<keyword id="KW-0325">Glycoprotein</keyword>
<keyword id="KW-0597">Phosphoprotein</keyword>
<keyword id="KW-1185">Reference proteome</keyword>
<keyword id="KW-0677">Repeat</keyword>
<keyword id="KW-0964">Secreted</keyword>
<keyword id="KW-0732">Signal</keyword>
<reference key="1">
    <citation type="submission" date="1995-09" db="EMBL/GenBank/DDBJ databases">
        <title>Nucleotide sequence of cDNA encoding rabbit fetuin.</title>
        <authorList>
            <person name="Osawa M."/>
            <person name="Saito T."/>
            <person name="Takeichi S."/>
        </authorList>
    </citation>
    <scope>NUCLEOTIDE SEQUENCE [MRNA]</scope>
    <source>
        <strain>New Zealand white</strain>
        <tissue>Liver</tissue>
    </source>
</reference>
<reference key="2">
    <citation type="journal article" date="1993" name="Eur. J. Biochem.">
        <title>Haemonectin, a granulocytic-cell-binding protein, is related to the plasma glycoprotein fetuin.</title>
        <authorList>
            <person name="White H."/>
            <person name="Totty N."/>
            <person name="Panayotou G."/>
        </authorList>
    </citation>
    <scope>PROTEIN SEQUENCE OF 19-26; 55-62; 118-128; 235-250 AND 332-344</scope>
    <source>
        <strain>New Zealand white</strain>
        <tissue>Bone marrow</tissue>
    </source>
</reference>
<dbReference type="EMBL" id="D67014">
    <property type="protein sequence ID" value="BAA22653.1"/>
    <property type="molecule type" value="mRNA"/>
</dbReference>
<dbReference type="PIR" id="S30340">
    <property type="entry name" value="S30340"/>
</dbReference>
<dbReference type="SMR" id="P80191"/>
<dbReference type="FunCoup" id="P80191">
    <property type="interactions" value="75"/>
</dbReference>
<dbReference type="STRING" id="9986.ENSOCUP00000026521"/>
<dbReference type="MEROPS" id="I25.020"/>
<dbReference type="GlyCosmos" id="P80191">
    <property type="glycosylation" value="2 sites, No reported glycans"/>
</dbReference>
<dbReference type="PaxDb" id="9986-ENSOCUP00000001775"/>
<dbReference type="eggNOG" id="ENOG502RYRI">
    <property type="taxonomic scope" value="Eukaryota"/>
</dbReference>
<dbReference type="InParanoid" id="P80191"/>
<dbReference type="Proteomes" id="UP000001811">
    <property type="component" value="Unplaced"/>
</dbReference>
<dbReference type="GO" id="GO:0072562">
    <property type="term" value="C:blood microparticle"/>
    <property type="evidence" value="ECO:0007669"/>
    <property type="project" value="TreeGrafter"/>
</dbReference>
<dbReference type="GO" id="GO:0031012">
    <property type="term" value="C:extracellular matrix"/>
    <property type="evidence" value="ECO:0007669"/>
    <property type="project" value="TreeGrafter"/>
</dbReference>
<dbReference type="GO" id="GO:0004869">
    <property type="term" value="F:cysteine-type endopeptidase inhibitor activity"/>
    <property type="evidence" value="ECO:0007669"/>
    <property type="project" value="InterPro"/>
</dbReference>
<dbReference type="GO" id="GO:0006953">
    <property type="term" value="P:acute-phase response"/>
    <property type="evidence" value="ECO:0000250"/>
    <property type="project" value="UniProtKB"/>
</dbReference>
<dbReference type="GO" id="GO:0007155">
    <property type="term" value="P:cell adhesion"/>
    <property type="evidence" value="ECO:0007669"/>
    <property type="project" value="UniProtKB-KW"/>
</dbReference>
<dbReference type="GO" id="GO:0030502">
    <property type="term" value="P:negative regulation of bone mineralization"/>
    <property type="evidence" value="ECO:0000250"/>
    <property type="project" value="UniProtKB"/>
</dbReference>
<dbReference type="GO" id="GO:0050766">
    <property type="term" value="P:positive regulation of phagocytosis"/>
    <property type="evidence" value="ECO:0000250"/>
    <property type="project" value="UniProtKB"/>
</dbReference>
<dbReference type="GO" id="GO:0050727">
    <property type="term" value="P:regulation of inflammatory response"/>
    <property type="evidence" value="ECO:0000250"/>
    <property type="project" value="UniProtKB"/>
</dbReference>
<dbReference type="CDD" id="cd00042">
    <property type="entry name" value="CY"/>
    <property type="match status" value="2"/>
</dbReference>
<dbReference type="FunFam" id="3.10.450.10:FF:000010">
    <property type="entry name" value="Alpha-2-HS-glycoprotein"/>
    <property type="match status" value="1"/>
</dbReference>
<dbReference type="FunFam" id="3.10.450.10:FF:000009">
    <property type="entry name" value="Alpha-2-HS-glycoprotein 2"/>
    <property type="match status" value="1"/>
</dbReference>
<dbReference type="Gene3D" id="3.10.450.10">
    <property type="match status" value="2"/>
</dbReference>
<dbReference type="InterPro" id="IPR000010">
    <property type="entry name" value="Cystatin_dom"/>
</dbReference>
<dbReference type="InterPro" id="IPR025760">
    <property type="entry name" value="Cystatin_Fetuin_A"/>
</dbReference>
<dbReference type="InterPro" id="IPR046350">
    <property type="entry name" value="Cystatin_sf"/>
</dbReference>
<dbReference type="InterPro" id="IPR050735">
    <property type="entry name" value="Kininogen_Fetuin_HRG"/>
</dbReference>
<dbReference type="InterPro" id="IPR001363">
    <property type="entry name" value="Prot_inh_fetuin_CS"/>
</dbReference>
<dbReference type="PANTHER" id="PTHR13814:SF6">
    <property type="entry name" value="ALPHA-2-HS-GLYCOPROTEIN"/>
    <property type="match status" value="1"/>
</dbReference>
<dbReference type="PANTHER" id="PTHR13814">
    <property type="entry name" value="FETUIN"/>
    <property type="match status" value="1"/>
</dbReference>
<dbReference type="Pfam" id="PF00031">
    <property type="entry name" value="Cystatin"/>
    <property type="match status" value="1"/>
</dbReference>
<dbReference type="SMART" id="SM00043">
    <property type="entry name" value="CY"/>
    <property type="match status" value="2"/>
</dbReference>
<dbReference type="SUPFAM" id="SSF54403">
    <property type="entry name" value="Cystatin/monellin"/>
    <property type="match status" value="2"/>
</dbReference>
<dbReference type="PROSITE" id="PS51529">
    <property type="entry name" value="CYSTATIN_FETUIN_A"/>
    <property type="match status" value="2"/>
</dbReference>
<dbReference type="PROSITE" id="PS01254">
    <property type="entry name" value="FETUIN_1"/>
    <property type="match status" value="1"/>
</dbReference>
<dbReference type="PROSITE" id="PS01255">
    <property type="entry name" value="FETUIN_2"/>
    <property type="match status" value="1"/>
</dbReference>
<feature type="signal peptide" evidence="1">
    <location>
        <begin position="1" status="less than"/>
        <end position="15"/>
    </location>
</feature>
<feature type="chain" id="PRO_0000008896" description="Alpha-2-HS-glycoprotein">
    <location>
        <begin position="16"/>
        <end position="360"/>
    </location>
</feature>
<feature type="domain" description="Cystatin fetuin-A-type 1" evidence="5">
    <location>
        <begin position="24"/>
        <end position="130"/>
    </location>
</feature>
<feature type="domain" description="Cystatin fetuin-A-type 2" evidence="5">
    <location>
        <begin position="141"/>
        <end position="252"/>
    </location>
</feature>
<feature type="region of interest" description="Disordered" evidence="6">
    <location>
        <begin position="260"/>
        <end position="285"/>
    </location>
</feature>
<feature type="modified residue" description="Phosphoserine" evidence="2">
    <location>
        <position position="131"/>
    </location>
</feature>
<feature type="modified residue" description="Phosphothreonine" evidence="3">
    <location>
        <position position="132"/>
    </location>
</feature>
<feature type="modified residue" description="Phosphoserine" evidence="2">
    <location>
        <position position="135"/>
    </location>
</feature>
<feature type="modified residue" description="Phosphothreonine" evidence="2">
    <location>
        <position position="312"/>
    </location>
</feature>
<feature type="modified residue" description="Phosphoserine" evidence="2">
    <location>
        <position position="318"/>
    </location>
</feature>
<feature type="modified residue" description="Phosphoserine" evidence="2">
    <location>
        <position position="321"/>
    </location>
</feature>
<feature type="modified residue" description="Phosphoserine" evidence="2">
    <location>
        <position position="323"/>
    </location>
</feature>
<feature type="glycosylation site" description="N-linked (GlcNAc...) asparagine" evidence="4">
    <location>
        <position position="96"/>
    </location>
</feature>
<feature type="glycosylation site" description="N-linked (GlcNAc...) asparagine" evidence="4">
    <location>
        <position position="153"/>
    </location>
</feature>
<feature type="disulfide bond" evidence="5">
    <location>
        <begin position="29"/>
        <end position="351"/>
    </location>
</feature>
<feature type="disulfide bond" evidence="5">
    <location>
        <begin position="86"/>
        <end position="97"/>
    </location>
</feature>
<feature type="disulfide bond" evidence="5">
    <location>
        <begin position="111"/>
        <end position="129"/>
    </location>
</feature>
<feature type="disulfide bond" evidence="5">
    <location>
        <begin position="143"/>
        <end position="146"/>
    </location>
</feature>
<feature type="disulfide bond" evidence="5">
    <location>
        <begin position="205"/>
        <end position="216"/>
    </location>
</feature>
<feature type="disulfide bond" evidence="5">
    <location>
        <begin position="227"/>
        <end position="244"/>
    </location>
</feature>
<feature type="sequence conflict" description="In Ref. 1; BAA22653." evidence="7" ref="1">
    <original>S</original>
    <variation>P</variation>
    <location>
        <position position="126"/>
    </location>
</feature>
<feature type="non-terminal residue">
    <location>
        <position position="1"/>
    </location>
</feature>
<accession>P80191</accession>
<accession>O18997</accession>
<sequence length="360" mass="38387">LVLLLSLAQLWSCHLVTAVPLLGYREHNCDDPEAEQVALLAVDHINNHLQQGYKHILNRIDKVKVWPRRPTGEVYELEIDTLETTCHALDPTPLANCSVRQVTQHAVEGDCDFHVLKQDGQFTVLSAKCDSTPDSAEDILKLCPDCPLLTPLNDTRVAQAAEAALTAFNEKNNGAYLQLVEIARAQLVPLPASTYVEFTVAATDCVAKEVTDPAKCNLLADKQYGFCKATVAEKVAREEVEVTCTIFPAQPVVPQPQPGVAGAAAVEPAPAVDPASPVSPPDGQSPSSLVVGPVLVAQAPAPPRAHYDLRQTFAGVPSMESGSGEAFHPGKVPVVVQPSVGAAPGPVITPCPGKVRYFKI</sequence>
<evidence type="ECO:0000250" key="1"/>
<evidence type="ECO:0000250" key="2">
    <source>
        <dbReference type="UniProtKB" id="P02765"/>
    </source>
</evidence>
<evidence type="ECO:0000250" key="3">
    <source>
        <dbReference type="UniProtKB" id="P29699"/>
    </source>
</evidence>
<evidence type="ECO:0000255" key="4"/>
<evidence type="ECO:0000255" key="5">
    <source>
        <dbReference type="PROSITE-ProRule" id="PRU00861"/>
    </source>
</evidence>
<evidence type="ECO:0000256" key="6">
    <source>
        <dbReference type="SAM" id="MobiDB-lite"/>
    </source>
</evidence>
<evidence type="ECO:0000305" key="7"/>
<organism>
    <name type="scientific">Oryctolagus cuniculus</name>
    <name type="common">Rabbit</name>
    <dbReference type="NCBI Taxonomy" id="9986"/>
    <lineage>
        <taxon>Eukaryota</taxon>
        <taxon>Metazoa</taxon>
        <taxon>Chordata</taxon>
        <taxon>Craniata</taxon>
        <taxon>Vertebrata</taxon>
        <taxon>Euteleostomi</taxon>
        <taxon>Mammalia</taxon>
        <taxon>Eutheria</taxon>
        <taxon>Euarchontoglires</taxon>
        <taxon>Glires</taxon>
        <taxon>Lagomorpha</taxon>
        <taxon>Leporidae</taxon>
        <taxon>Oryctolagus</taxon>
    </lineage>
</organism>
<gene>
    <name type="primary">AHSG</name>
    <name type="synonym">FETUA</name>
</gene>
<proteinExistence type="evidence at protein level"/>
<comment type="function">
    <text>A cell adhesion protein that binds immature cells of the granulocyte lineage.</text>
</comment>
<comment type="subcellular location">
    <subcellularLocation>
        <location>Secreted</location>
    </subcellularLocation>
</comment>
<comment type="tissue specificity">
    <text>Bone marrow.</text>
</comment>
<comment type="PTM">
    <text evidence="2">Phosphorylated by FAM20C in the extracellular medium.</text>
</comment>
<comment type="similarity">
    <text evidence="5">Belongs to the fetuin family.</text>
</comment>